<sequence length="122" mass="13721">MARIAGIDLPRNKRIEIALTYIYGIGRTTAQKILAESGVSVDTRTDSLTEAEVAKIREFIDKNIKVEGDLRRDVSMNIKRLMDLGCYRGLRHRKGLPVRGQRTKTNARTRKGPARTVAGKKK</sequence>
<evidence type="ECO:0000255" key="1">
    <source>
        <dbReference type="HAMAP-Rule" id="MF_01315"/>
    </source>
</evidence>
<evidence type="ECO:0000256" key="2">
    <source>
        <dbReference type="SAM" id="MobiDB-lite"/>
    </source>
</evidence>
<evidence type="ECO:0000305" key="3"/>
<gene>
    <name evidence="1" type="primary">rpsM</name>
    <name type="ordered locus">Gmet_0650</name>
</gene>
<keyword id="KW-1185">Reference proteome</keyword>
<keyword id="KW-0687">Ribonucleoprotein</keyword>
<keyword id="KW-0689">Ribosomal protein</keyword>
<keyword id="KW-0694">RNA-binding</keyword>
<keyword id="KW-0699">rRNA-binding</keyword>
<keyword id="KW-0820">tRNA-binding</keyword>
<dbReference type="EMBL" id="CP000148">
    <property type="protein sequence ID" value="ABB30892.1"/>
    <property type="molecule type" value="Genomic_DNA"/>
</dbReference>
<dbReference type="RefSeq" id="WP_004514259.1">
    <property type="nucleotide sequence ID" value="NC_007517.1"/>
</dbReference>
<dbReference type="SMR" id="Q39XY2"/>
<dbReference type="STRING" id="269799.Gmet_0650"/>
<dbReference type="KEGG" id="gme:Gmet_0650"/>
<dbReference type="eggNOG" id="COG0099">
    <property type="taxonomic scope" value="Bacteria"/>
</dbReference>
<dbReference type="HOGENOM" id="CLU_103849_1_2_7"/>
<dbReference type="Proteomes" id="UP000007073">
    <property type="component" value="Chromosome"/>
</dbReference>
<dbReference type="GO" id="GO:0005829">
    <property type="term" value="C:cytosol"/>
    <property type="evidence" value="ECO:0007669"/>
    <property type="project" value="TreeGrafter"/>
</dbReference>
<dbReference type="GO" id="GO:0015935">
    <property type="term" value="C:small ribosomal subunit"/>
    <property type="evidence" value="ECO:0007669"/>
    <property type="project" value="TreeGrafter"/>
</dbReference>
<dbReference type="GO" id="GO:0019843">
    <property type="term" value="F:rRNA binding"/>
    <property type="evidence" value="ECO:0007669"/>
    <property type="project" value="UniProtKB-UniRule"/>
</dbReference>
<dbReference type="GO" id="GO:0003735">
    <property type="term" value="F:structural constituent of ribosome"/>
    <property type="evidence" value="ECO:0007669"/>
    <property type="project" value="InterPro"/>
</dbReference>
<dbReference type="GO" id="GO:0000049">
    <property type="term" value="F:tRNA binding"/>
    <property type="evidence" value="ECO:0007669"/>
    <property type="project" value="UniProtKB-UniRule"/>
</dbReference>
<dbReference type="GO" id="GO:0006412">
    <property type="term" value="P:translation"/>
    <property type="evidence" value="ECO:0007669"/>
    <property type="project" value="UniProtKB-UniRule"/>
</dbReference>
<dbReference type="FunFam" id="1.10.8.50:FF:000001">
    <property type="entry name" value="30S ribosomal protein S13"/>
    <property type="match status" value="1"/>
</dbReference>
<dbReference type="FunFam" id="4.10.910.10:FF:000001">
    <property type="entry name" value="30S ribosomal protein S13"/>
    <property type="match status" value="1"/>
</dbReference>
<dbReference type="Gene3D" id="1.10.8.50">
    <property type="match status" value="1"/>
</dbReference>
<dbReference type="Gene3D" id="4.10.910.10">
    <property type="entry name" value="30s ribosomal protein s13, domain 2"/>
    <property type="match status" value="1"/>
</dbReference>
<dbReference type="HAMAP" id="MF_01315">
    <property type="entry name" value="Ribosomal_uS13"/>
    <property type="match status" value="1"/>
</dbReference>
<dbReference type="InterPro" id="IPR027437">
    <property type="entry name" value="Rbsml_uS13_C"/>
</dbReference>
<dbReference type="InterPro" id="IPR001892">
    <property type="entry name" value="Ribosomal_uS13"/>
</dbReference>
<dbReference type="InterPro" id="IPR010979">
    <property type="entry name" value="Ribosomal_uS13-like_H2TH"/>
</dbReference>
<dbReference type="InterPro" id="IPR019980">
    <property type="entry name" value="Ribosomal_uS13_bac-type"/>
</dbReference>
<dbReference type="InterPro" id="IPR018269">
    <property type="entry name" value="Ribosomal_uS13_CS"/>
</dbReference>
<dbReference type="NCBIfam" id="TIGR03631">
    <property type="entry name" value="uS13_bact"/>
    <property type="match status" value="1"/>
</dbReference>
<dbReference type="PANTHER" id="PTHR10871">
    <property type="entry name" value="30S RIBOSOMAL PROTEIN S13/40S RIBOSOMAL PROTEIN S18"/>
    <property type="match status" value="1"/>
</dbReference>
<dbReference type="PANTHER" id="PTHR10871:SF1">
    <property type="entry name" value="SMALL RIBOSOMAL SUBUNIT PROTEIN US13M"/>
    <property type="match status" value="1"/>
</dbReference>
<dbReference type="Pfam" id="PF00416">
    <property type="entry name" value="Ribosomal_S13"/>
    <property type="match status" value="1"/>
</dbReference>
<dbReference type="PIRSF" id="PIRSF002134">
    <property type="entry name" value="Ribosomal_S13"/>
    <property type="match status" value="1"/>
</dbReference>
<dbReference type="SUPFAM" id="SSF46946">
    <property type="entry name" value="S13-like H2TH domain"/>
    <property type="match status" value="1"/>
</dbReference>
<dbReference type="PROSITE" id="PS00646">
    <property type="entry name" value="RIBOSOMAL_S13_1"/>
    <property type="match status" value="1"/>
</dbReference>
<dbReference type="PROSITE" id="PS50159">
    <property type="entry name" value="RIBOSOMAL_S13_2"/>
    <property type="match status" value="1"/>
</dbReference>
<feature type="chain" id="PRO_0000230509" description="Small ribosomal subunit protein uS13">
    <location>
        <begin position="1"/>
        <end position="122"/>
    </location>
</feature>
<feature type="region of interest" description="Disordered" evidence="2">
    <location>
        <begin position="97"/>
        <end position="122"/>
    </location>
</feature>
<proteinExistence type="inferred from homology"/>
<protein>
    <recommendedName>
        <fullName evidence="1">Small ribosomal subunit protein uS13</fullName>
    </recommendedName>
    <alternativeName>
        <fullName evidence="3">30S ribosomal protein S13</fullName>
    </alternativeName>
</protein>
<organism>
    <name type="scientific">Geobacter metallireducens (strain ATCC 53774 / DSM 7210 / GS-15)</name>
    <dbReference type="NCBI Taxonomy" id="269799"/>
    <lineage>
        <taxon>Bacteria</taxon>
        <taxon>Pseudomonadati</taxon>
        <taxon>Thermodesulfobacteriota</taxon>
        <taxon>Desulfuromonadia</taxon>
        <taxon>Geobacterales</taxon>
        <taxon>Geobacteraceae</taxon>
        <taxon>Geobacter</taxon>
    </lineage>
</organism>
<accession>Q39XY2</accession>
<comment type="function">
    <text evidence="1">Located at the top of the head of the 30S subunit, it contacts several helices of the 16S rRNA. In the 70S ribosome it contacts the 23S rRNA (bridge B1a) and protein L5 of the 50S subunit (bridge B1b), connecting the 2 subunits; these bridges are implicated in subunit movement. Contacts the tRNAs in the A and P-sites.</text>
</comment>
<comment type="subunit">
    <text evidence="1">Part of the 30S ribosomal subunit. Forms a loose heterodimer with protein S19. Forms two bridges to the 50S subunit in the 70S ribosome.</text>
</comment>
<comment type="similarity">
    <text evidence="1">Belongs to the universal ribosomal protein uS13 family.</text>
</comment>
<name>RS13_GEOMG</name>
<reference key="1">
    <citation type="journal article" date="2009" name="BMC Microbiol.">
        <title>The genome sequence of Geobacter metallireducens: features of metabolism, physiology and regulation common and dissimilar to Geobacter sulfurreducens.</title>
        <authorList>
            <person name="Aklujkar M."/>
            <person name="Krushkal J."/>
            <person name="DiBartolo G."/>
            <person name="Lapidus A."/>
            <person name="Land M.L."/>
            <person name="Lovley D.R."/>
        </authorList>
    </citation>
    <scope>NUCLEOTIDE SEQUENCE [LARGE SCALE GENOMIC DNA]</scope>
    <source>
        <strain>ATCC 53774 / DSM 7210 / GS-15</strain>
    </source>
</reference>